<accession>Q7N9B5</accession>
<evidence type="ECO:0000255" key="1">
    <source>
        <dbReference type="HAMAP-Rule" id="MF_01564"/>
    </source>
</evidence>
<sequence length="95" mass="10588">MLYTVGRSPYQCDFNVISKLLARGDDILFIQDGVLAGIEGNCYLSALISCGAALYALKEDIEARGLDDQVSDKVQVIDYTDFVNLTVKHHQQFAW</sequence>
<organism>
    <name type="scientific">Photorhabdus laumondii subsp. laumondii (strain DSM 15139 / CIP 105565 / TT01)</name>
    <name type="common">Photorhabdus luminescens subsp. laumondii</name>
    <dbReference type="NCBI Taxonomy" id="243265"/>
    <lineage>
        <taxon>Bacteria</taxon>
        <taxon>Pseudomonadati</taxon>
        <taxon>Pseudomonadota</taxon>
        <taxon>Gammaproteobacteria</taxon>
        <taxon>Enterobacterales</taxon>
        <taxon>Morganellaceae</taxon>
        <taxon>Photorhabdus</taxon>
    </lineage>
</organism>
<comment type="function">
    <text evidence="1">Part of a sulfur-relay system required for 2-thiolation of 5-methylaminomethyl-2-thiouridine (mnm(5)s(2)U) at tRNA wobble positions.</text>
</comment>
<comment type="subunit">
    <text evidence="1">Heterohexamer, formed by a dimer of trimers. The hexameric TusBCD complex contains 2 copies each of TusB, TusC and TusD. The TusBCD complex interacts with TusE.</text>
</comment>
<comment type="subcellular location">
    <subcellularLocation>
        <location evidence="1">Cytoplasm</location>
    </subcellularLocation>
</comment>
<comment type="similarity">
    <text evidence="1">Belongs to the DsrH/TusB family.</text>
</comment>
<gene>
    <name evidence="1" type="primary">tusB</name>
    <name type="ordered locus">plu0428</name>
</gene>
<dbReference type="EMBL" id="BX571860">
    <property type="protein sequence ID" value="CAE12723.1"/>
    <property type="molecule type" value="Genomic_DNA"/>
</dbReference>
<dbReference type="RefSeq" id="WP_011144814.1">
    <property type="nucleotide sequence ID" value="NC_005126.1"/>
</dbReference>
<dbReference type="SMR" id="Q7N9B5"/>
<dbReference type="STRING" id="243265.plu0428"/>
<dbReference type="GeneID" id="48846714"/>
<dbReference type="KEGG" id="plu:plu0428"/>
<dbReference type="eggNOG" id="COG2168">
    <property type="taxonomic scope" value="Bacteria"/>
</dbReference>
<dbReference type="HOGENOM" id="CLU_166087_2_1_6"/>
<dbReference type="OrthoDB" id="9795117at2"/>
<dbReference type="Proteomes" id="UP000002514">
    <property type="component" value="Chromosome"/>
</dbReference>
<dbReference type="GO" id="GO:1990228">
    <property type="term" value="C:sulfurtransferase complex"/>
    <property type="evidence" value="ECO:0007669"/>
    <property type="project" value="TreeGrafter"/>
</dbReference>
<dbReference type="GO" id="GO:0002143">
    <property type="term" value="P:tRNA wobble position uridine thiolation"/>
    <property type="evidence" value="ECO:0007669"/>
    <property type="project" value="InterPro"/>
</dbReference>
<dbReference type="Gene3D" id="3.40.1260.10">
    <property type="entry name" value="DsrEFH-like"/>
    <property type="match status" value="1"/>
</dbReference>
<dbReference type="HAMAP" id="MF_01564">
    <property type="entry name" value="Thiourid_synth_B"/>
    <property type="match status" value="1"/>
</dbReference>
<dbReference type="InterPro" id="IPR027396">
    <property type="entry name" value="DsrEFH-like"/>
</dbReference>
<dbReference type="InterPro" id="IPR023526">
    <property type="entry name" value="Sulphur_relay_TusB"/>
</dbReference>
<dbReference type="InterPro" id="IPR007215">
    <property type="entry name" value="Sulphur_relay_TusB/DsrH"/>
</dbReference>
<dbReference type="NCBIfam" id="NF010035">
    <property type="entry name" value="PRK13510.1"/>
    <property type="match status" value="1"/>
</dbReference>
<dbReference type="NCBIfam" id="TIGR03011">
    <property type="entry name" value="sulf_tusB_dsrH"/>
    <property type="match status" value="1"/>
</dbReference>
<dbReference type="PANTHER" id="PTHR37526">
    <property type="entry name" value="PROTEIN TUSB"/>
    <property type="match status" value="1"/>
</dbReference>
<dbReference type="PANTHER" id="PTHR37526:SF1">
    <property type="entry name" value="PROTEIN TUSB"/>
    <property type="match status" value="1"/>
</dbReference>
<dbReference type="Pfam" id="PF04077">
    <property type="entry name" value="DsrH"/>
    <property type="match status" value="1"/>
</dbReference>
<dbReference type="SUPFAM" id="SSF75169">
    <property type="entry name" value="DsrEFH-like"/>
    <property type="match status" value="1"/>
</dbReference>
<protein>
    <recommendedName>
        <fullName evidence="1">Protein TusB</fullName>
    </recommendedName>
    <alternativeName>
        <fullName evidence="1">tRNA 2-thiouridine synthesizing protein B</fullName>
    </alternativeName>
</protein>
<name>TUSB_PHOLL</name>
<reference key="1">
    <citation type="journal article" date="2003" name="Nat. Biotechnol.">
        <title>The genome sequence of the entomopathogenic bacterium Photorhabdus luminescens.</title>
        <authorList>
            <person name="Duchaud E."/>
            <person name="Rusniok C."/>
            <person name="Frangeul L."/>
            <person name="Buchrieser C."/>
            <person name="Givaudan A."/>
            <person name="Taourit S."/>
            <person name="Bocs S."/>
            <person name="Boursaux-Eude C."/>
            <person name="Chandler M."/>
            <person name="Charles J.-F."/>
            <person name="Dassa E."/>
            <person name="Derose R."/>
            <person name="Derzelle S."/>
            <person name="Freyssinet G."/>
            <person name="Gaudriault S."/>
            <person name="Medigue C."/>
            <person name="Lanois A."/>
            <person name="Powell K."/>
            <person name="Siguier P."/>
            <person name="Vincent R."/>
            <person name="Wingate V."/>
            <person name="Zouine M."/>
            <person name="Glaser P."/>
            <person name="Boemare N."/>
            <person name="Danchin A."/>
            <person name="Kunst F."/>
        </authorList>
    </citation>
    <scope>NUCLEOTIDE SEQUENCE [LARGE SCALE GENOMIC DNA]</scope>
    <source>
        <strain>DSM 15139 / CIP 105565 / TT01</strain>
    </source>
</reference>
<feature type="chain" id="PRO_0000234515" description="Protein TusB">
    <location>
        <begin position="1"/>
        <end position="95"/>
    </location>
</feature>
<proteinExistence type="inferred from homology"/>
<keyword id="KW-0963">Cytoplasm</keyword>
<keyword id="KW-1185">Reference proteome</keyword>
<keyword id="KW-0819">tRNA processing</keyword>